<name>V26AA_XENLA</name>
<organism>
    <name type="scientific">Xenopus laevis</name>
    <name type="common">African clawed frog</name>
    <dbReference type="NCBI Taxonomy" id="8355"/>
    <lineage>
        <taxon>Eukaryota</taxon>
        <taxon>Metazoa</taxon>
        <taxon>Chordata</taxon>
        <taxon>Craniata</taxon>
        <taxon>Vertebrata</taxon>
        <taxon>Euteleostomi</taxon>
        <taxon>Amphibia</taxon>
        <taxon>Batrachia</taxon>
        <taxon>Anura</taxon>
        <taxon>Pipoidea</taxon>
        <taxon>Pipidae</taxon>
        <taxon>Xenopodinae</taxon>
        <taxon>Xenopus</taxon>
        <taxon>Xenopus</taxon>
    </lineage>
</organism>
<feature type="chain" id="PRO_0000247086" description="Vacuolar protein sorting-associated protein 26A-A">
    <location>
        <begin position="1"/>
        <end position="326"/>
    </location>
</feature>
<feature type="region of interest" description="Disordered" evidence="2">
    <location>
        <begin position="306"/>
        <end position="326"/>
    </location>
</feature>
<feature type="compositionally biased region" description="Low complexity" evidence="2">
    <location>
        <begin position="315"/>
        <end position="326"/>
    </location>
</feature>
<evidence type="ECO:0000250" key="1">
    <source>
        <dbReference type="UniProtKB" id="O75436"/>
    </source>
</evidence>
<evidence type="ECO:0000256" key="2">
    <source>
        <dbReference type="SAM" id="MobiDB-lite"/>
    </source>
</evidence>
<evidence type="ECO:0000305" key="3"/>
<gene>
    <name type="primary">vps26a-a</name>
</gene>
<protein>
    <recommendedName>
        <fullName>Vacuolar protein sorting-associated protein 26A-A</fullName>
    </recommendedName>
    <alternativeName>
        <fullName>Vesicle protein sorting 26A-A</fullName>
    </alternativeName>
</protein>
<accession>Q6IRD0</accession>
<proteinExistence type="evidence at transcript level"/>
<dbReference type="EMBL" id="BC070968">
    <property type="protein sequence ID" value="AAH70968.1"/>
    <property type="molecule type" value="mRNA"/>
</dbReference>
<dbReference type="SMR" id="Q6IRD0"/>
<dbReference type="DNASU" id="432091"/>
<dbReference type="GeneID" id="432091"/>
<dbReference type="KEGG" id="xla:432091"/>
<dbReference type="AGR" id="Xenbase:XB-GENE-944866"/>
<dbReference type="CTD" id="432091"/>
<dbReference type="Xenbase" id="XB-GENE-944866">
    <property type="gene designation" value="vps26a.L"/>
</dbReference>
<dbReference type="OMA" id="AGKVCIE"/>
<dbReference type="OrthoDB" id="3821113at2759"/>
<dbReference type="Proteomes" id="UP000186698">
    <property type="component" value="Chromosome 7L"/>
</dbReference>
<dbReference type="Bgee" id="432091">
    <property type="expression patterns" value="Expressed in zone of skin and 19 other cell types or tissues"/>
</dbReference>
<dbReference type="GO" id="GO:0005829">
    <property type="term" value="C:cytosol"/>
    <property type="evidence" value="ECO:0007669"/>
    <property type="project" value="GOC"/>
</dbReference>
<dbReference type="GO" id="GO:0005769">
    <property type="term" value="C:early endosome"/>
    <property type="evidence" value="ECO:0007669"/>
    <property type="project" value="UniProtKB-SubCell"/>
</dbReference>
<dbReference type="GO" id="GO:0005768">
    <property type="term" value="C:endosome"/>
    <property type="evidence" value="ECO:0000250"/>
    <property type="project" value="UniProtKB"/>
</dbReference>
<dbReference type="GO" id="GO:0010008">
    <property type="term" value="C:endosome membrane"/>
    <property type="evidence" value="ECO:0007669"/>
    <property type="project" value="UniProtKB-SubCell"/>
</dbReference>
<dbReference type="GO" id="GO:0030904">
    <property type="term" value="C:retromer complex"/>
    <property type="evidence" value="ECO:0000318"/>
    <property type="project" value="GO_Central"/>
</dbReference>
<dbReference type="GO" id="GO:0031982">
    <property type="term" value="C:vesicle"/>
    <property type="evidence" value="ECO:0000250"/>
    <property type="project" value="UniProtKB"/>
</dbReference>
<dbReference type="GO" id="GO:0006886">
    <property type="term" value="P:intracellular protein transport"/>
    <property type="evidence" value="ECO:0000318"/>
    <property type="project" value="GO_Central"/>
</dbReference>
<dbReference type="GO" id="GO:0042147">
    <property type="term" value="P:retrograde transport, endosome to Golgi"/>
    <property type="evidence" value="ECO:0000318"/>
    <property type="project" value="GO_Central"/>
</dbReference>
<dbReference type="FunFam" id="2.60.40.640:FF:000001">
    <property type="entry name" value="Vacuolar protein sorting-associated protein 26A"/>
    <property type="match status" value="1"/>
</dbReference>
<dbReference type="FunFam" id="2.60.40.640:FF:000002">
    <property type="entry name" value="Vacuolar protein sorting-associated protein 26A"/>
    <property type="match status" value="1"/>
</dbReference>
<dbReference type="Gene3D" id="2.60.40.640">
    <property type="match status" value="2"/>
</dbReference>
<dbReference type="InterPro" id="IPR014752">
    <property type="entry name" value="Arrestin-like_C"/>
</dbReference>
<dbReference type="InterPro" id="IPR028934">
    <property type="entry name" value="Vps26-related"/>
</dbReference>
<dbReference type="PANTHER" id="PTHR12233">
    <property type="entry name" value="VACUOLAR PROTEIN SORTING 26 RELATED"/>
    <property type="match status" value="1"/>
</dbReference>
<dbReference type="Pfam" id="PF03643">
    <property type="entry name" value="Vps26"/>
    <property type="match status" value="1"/>
</dbReference>
<keyword id="KW-0963">Cytoplasm</keyword>
<keyword id="KW-0967">Endosome</keyword>
<keyword id="KW-0472">Membrane</keyword>
<keyword id="KW-0653">Protein transport</keyword>
<keyword id="KW-1185">Reference proteome</keyword>
<keyword id="KW-0813">Transport</keyword>
<comment type="function">
    <text evidence="1">Acts as a component of the retromer cargo-selective complex (CSC). The CSC is believed to be the core functional component of retromer or respective retromer complex variants acting to prevent missorting of selected transmembrane cargo proteins into the lysosomal degradation pathway. Retromer mediates retrograde transport of cargo proteins from endosomes to the trans-Golgi network (TGN) (By similarity).</text>
</comment>
<comment type="subunit">
    <text evidence="1">Component of the heterotrimeric retromer cargo-selective complex (CSC) which is believed to associate with variable sorting nexins to form functionally distinct retromer complex variants (By similarity).</text>
</comment>
<comment type="subcellular location">
    <subcellularLocation>
        <location>Cytoplasm</location>
    </subcellularLocation>
    <subcellularLocation>
        <location>Endosome membrane</location>
        <topology>Peripheral membrane protein</topology>
    </subcellularLocation>
    <subcellularLocation>
        <location evidence="1">Early endosome</location>
    </subcellularLocation>
    <text evidence="1">Localizes to tubular profiles adjacent to endosomes (By similarity).</text>
</comment>
<comment type="similarity">
    <text evidence="3">Belongs to the VPS26 family.</text>
</comment>
<reference key="1">
    <citation type="submission" date="2004-05" db="EMBL/GenBank/DDBJ databases">
        <authorList>
            <consortium name="NIH - Xenopus Gene Collection (XGC) project"/>
        </authorList>
    </citation>
    <scope>NUCLEOTIDE SEQUENCE [LARGE SCALE MRNA]</scope>
    <source>
        <tissue>Embryo</tissue>
    </source>
</reference>
<sequence>MSFLSGFFGPICEIEVVLNDAETRKVSEIKTEEGKVEKHFLFYDGESVAGKVNIVFKQPGKRLEHHGIRIEFVGQIELFNDKSNTHEFVNLVKELALPGELTQSRNYDFEFMQVEKPYESYIGSNVRLRYFLKVTIVRRLTDLVKEYDLIVHQLATYPDVNNSIKMEVGIEDCLHIEFEYNKSKYHLKDVIVGKIYFLLVRIKIQHMELQLIKKEITGIGPSTTTETETVAKYEIMDGAPVKGESIPIRLFIAGYDPTPTMRDVNKKFSVRYFLNLVLVDEEDRRYFKQQEIVLWRKAPEKIKKRTNFHQRFEPQEPQASAEEPEI</sequence>